<feature type="chain" id="PRO_0000128571" description="Large ribosomal subunit protein uL14">
    <location>
        <begin position="1"/>
        <end position="132"/>
    </location>
</feature>
<feature type="strand" evidence="6">
    <location>
        <begin position="5"/>
        <end position="8"/>
    </location>
</feature>
<feature type="strand" evidence="6">
    <location>
        <begin position="17"/>
        <end position="20"/>
    </location>
</feature>
<feature type="strand" evidence="6">
    <location>
        <begin position="22"/>
        <end position="34"/>
    </location>
</feature>
<feature type="strand" evidence="6">
    <location>
        <begin position="52"/>
        <end position="60"/>
    </location>
</feature>
<feature type="turn" evidence="6">
    <location>
        <begin position="62"/>
        <end position="66"/>
    </location>
</feature>
<feature type="strand" evidence="6">
    <location>
        <begin position="68"/>
        <end position="75"/>
    </location>
</feature>
<feature type="strand" evidence="6">
    <location>
        <begin position="87"/>
        <end position="92"/>
    </location>
</feature>
<feature type="strand" evidence="6">
    <location>
        <begin position="94"/>
        <end position="98"/>
    </location>
</feature>
<feature type="strand" evidence="7">
    <location>
        <begin position="100"/>
        <end position="102"/>
    </location>
</feature>
<feature type="strand" evidence="6">
    <location>
        <begin position="104"/>
        <end position="107"/>
    </location>
</feature>
<feature type="strand" evidence="6">
    <location>
        <begin position="111"/>
        <end position="114"/>
    </location>
</feature>
<feature type="helix" evidence="6">
    <location>
        <begin position="115"/>
        <end position="120"/>
    </location>
</feature>
<feature type="helix" evidence="6">
    <location>
        <begin position="122"/>
        <end position="125"/>
    </location>
</feature>
<feature type="strand" evidence="6">
    <location>
        <begin position="129"/>
        <end position="132"/>
    </location>
</feature>
<dbReference type="EMBL" id="X55311">
    <property type="protein sequence ID" value="CAA39018.1"/>
    <property type="molecule type" value="Genomic_DNA"/>
</dbReference>
<dbReference type="EMBL" id="AY596297">
    <property type="protein sequence ID" value="AAV46519.1"/>
    <property type="molecule type" value="Genomic_DNA"/>
</dbReference>
<dbReference type="PIR" id="S10734">
    <property type="entry name" value="R5HS14"/>
</dbReference>
<dbReference type="RefSeq" id="WP_004516961.1">
    <property type="nucleotide sequence ID" value="NZ_CP039138.1"/>
</dbReference>
<dbReference type="PDB" id="1C04">
    <property type="method" value="X-ray"/>
    <property type="resolution" value="5.00 A"/>
    <property type="chains" value="D=71-85"/>
</dbReference>
<dbReference type="PDB" id="1FFK">
    <property type="method" value="X-ray"/>
    <property type="resolution" value="2.40 A"/>
    <property type="chains" value="H=1-132"/>
</dbReference>
<dbReference type="PDB" id="1JJ2">
    <property type="method" value="X-ray"/>
    <property type="resolution" value="2.40 A"/>
    <property type="chains" value="J=1-132"/>
</dbReference>
<dbReference type="PDB" id="1K73">
    <property type="method" value="X-ray"/>
    <property type="resolution" value="3.01 A"/>
    <property type="chains" value="L=1-132"/>
</dbReference>
<dbReference type="PDB" id="1K8A">
    <property type="method" value="X-ray"/>
    <property type="resolution" value="3.00 A"/>
    <property type="chains" value="L=1-132"/>
</dbReference>
<dbReference type="PDB" id="1K9M">
    <property type="method" value="X-ray"/>
    <property type="resolution" value="3.00 A"/>
    <property type="chains" value="L=1-132"/>
</dbReference>
<dbReference type="PDB" id="1KC8">
    <property type="method" value="X-ray"/>
    <property type="resolution" value="3.01 A"/>
    <property type="chains" value="L=1-132"/>
</dbReference>
<dbReference type="PDB" id="1KD1">
    <property type="method" value="X-ray"/>
    <property type="resolution" value="3.00 A"/>
    <property type="chains" value="L=1-132"/>
</dbReference>
<dbReference type="PDB" id="1KQS">
    <property type="method" value="X-ray"/>
    <property type="resolution" value="3.10 A"/>
    <property type="chains" value="J=1-132"/>
</dbReference>
<dbReference type="PDB" id="1M1K">
    <property type="method" value="X-ray"/>
    <property type="resolution" value="3.20 A"/>
    <property type="chains" value="L=1-132"/>
</dbReference>
<dbReference type="PDB" id="1M90">
    <property type="method" value="X-ray"/>
    <property type="resolution" value="2.80 A"/>
    <property type="chains" value="L=1-132"/>
</dbReference>
<dbReference type="PDB" id="1N8R">
    <property type="method" value="X-ray"/>
    <property type="resolution" value="3.00 A"/>
    <property type="chains" value="L=1-132"/>
</dbReference>
<dbReference type="PDB" id="1NJI">
    <property type="method" value="X-ray"/>
    <property type="resolution" value="3.00 A"/>
    <property type="chains" value="L=1-132"/>
</dbReference>
<dbReference type="PDB" id="1Q7Y">
    <property type="method" value="X-ray"/>
    <property type="resolution" value="3.20 A"/>
    <property type="chains" value="L=1-132"/>
</dbReference>
<dbReference type="PDB" id="1Q81">
    <property type="method" value="X-ray"/>
    <property type="resolution" value="2.95 A"/>
    <property type="chains" value="L=1-132"/>
</dbReference>
<dbReference type="PDB" id="1Q82">
    <property type="method" value="X-ray"/>
    <property type="resolution" value="2.98 A"/>
    <property type="chains" value="L=1-132"/>
</dbReference>
<dbReference type="PDB" id="1Q86">
    <property type="method" value="X-ray"/>
    <property type="resolution" value="3.00 A"/>
    <property type="chains" value="L=1-132"/>
</dbReference>
<dbReference type="PDB" id="1QVF">
    <property type="method" value="X-ray"/>
    <property type="resolution" value="3.10 A"/>
    <property type="chains" value="J=1-132"/>
</dbReference>
<dbReference type="PDB" id="1QVG">
    <property type="method" value="X-ray"/>
    <property type="resolution" value="2.90 A"/>
    <property type="chains" value="J=1-132"/>
</dbReference>
<dbReference type="PDB" id="1S72">
    <property type="method" value="X-ray"/>
    <property type="resolution" value="2.40 A"/>
    <property type="chains" value="K=1-132"/>
</dbReference>
<dbReference type="PDB" id="1VQ4">
    <property type="method" value="X-ray"/>
    <property type="resolution" value="2.70 A"/>
    <property type="chains" value="K=1-132"/>
</dbReference>
<dbReference type="PDB" id="1VQ5">
    <property type="method" value="X-ray"/>
    <property type="resolution" value="2.60 A"/>
    <property type="chains" value="K=1-132"/>
</dbReference>
<dbReference type="PDB" id="1VQ6">
    <property type="method" value="X-ray"/>
    <property type="resolution" value="2.70 A"/>
    <property type="chains" value="K=1-132"/>
</dbReference>
<dbReference type="PDB" id="1VQ7">
    <property type="method" value="X-ray"/>
    <property type="resolution" value="2.50 A"/>
    <property type="chains" value="K=1-132"/>
</dbReference>
<dbReference type="PDB" id="1VQ8">
    <property type="method" value="X-ray"/>
    <property type="resolution" value="2.20 A"/>
    <property type="chains" value="K=1-132"/>
</dbReference>
<dbReference type="PDB" id="1VQ9">
    <property type="method" value="X-ray"/>
    <property type="resolution" value="2.40 A"/>
    <property type="chains" value="K=1-132"/>
</dbReference>
<dbReference type="PDB" id="1VQK">
    <property type="method" value="X-ray"/>
    <property type="resolution" value="2.30 A"/>
    <property type="chains" value="K=1-132"/>
</dbReference>
<dbReference type="PDB" id="1VQL">
    <property type="method" value="X-ray"/>
    <property type="resolution" value="2.30 A"/>
    <property type="chains" value="K=1-132"/>
</dbReference>
<dbReference type="PDB" id="1VQM">
    <property type="method" value="X-ray"/>
    <property type="resolution" value="2.30 A"/>
    <property type="chains" value="K=1-132"/>
</dbReference>
<dbReference type="PDB" id="1VQN">
    <property type="method" value="X-ray"/>
    <property type="resolution" value="2.40 A"/>
    <property type="chains" value="K=1-132"/>
</dbReference>
<dbReference type="PDB" id="1VQO">
    <property type="method" value="X-ray"/>
    <property type="resolution" value="2.20 A"/>
    <property type="chains" value="K=1-132"/>
</dbReference>
<dbReference type="PDB" id="1VQP">
    <property type="method" value="X-ray"/>
    <property type="resolution" value="2.25 A"/>
    <property type="chains" value="K=1-132"/>
</dbReference>
<dbReference type="PDB" id="1W2B">
    <property type="method" value="X-ray"/>
    <property type="resolution" value="3.50 A"/>
    <property type="chains" value="J=1-132"/>
</dbReference>
<dbReference type="PDB" id="1YHQ">
    <property type="method" value="X-ray"/>
    <property type="resolution" value="2.40 A"/>
    <property type="chains" value="K=1-132"/>
</dbReference>
<dbReference type="PDB" id="1YI2">
    <property type="method" value="X-ray"/>
    <property type="resolution" value="2.65 A"/>
    <property type="chains" value="K=1-132"/>
</dbReference>
<dbReference type="PDB" id="1YIJ">
    <property type="method" value="X-ray"/>
    <property type="resolution" value="2.60 A"/>
    <property type="chains" value="K=1-132"/>
</dbReference>
<dbReference type="PDB" id="1YIT">
    <property type="method" value="X-ray"/>
    <property type="resolution" value="2.80 A"/>
    <property type="chains" value="K=1-132"/>
</dbReference>
<dbReference type="PDB" id="1YJ9">
    <property type="method" value="X-ray"/>
    <property type="resolution" value="2.90 A"/>
    <property type="chains" value="K=1-132"/>
</dbReference>
<dbReference type="PDB" id="1YJN">
    <property type="method" value="X-ray"/>
    <property type="resolution" value="3.00 A"/>
    <property type="chains" value="K=1-132"/>
</dbReference>
<dbReference type="PDB" id="1YJW">
    <property type="method" value="X-ray"/>
    <property type="resolution" value="2.90 A"/>
    <property type="chains" value="K=1-132"/>
</dbReference>
<dbReference type="PDB" id="2OTJ">
    <property type="method" value="X-ray"/>
    <property type="resolution" value="2.90 A"/>
    <property type="chains" value="K=1-132"/>
</dbReference>
<dbReference type="PDB" id="2OTL">
    <property type="method" value="X-ray"/>
    <property type="resolution" value="2.70 A"/>
    <property type="chains" value="K=1-132"/>
</dbReference>
<dbReference type="PDB" id="2QA4">
    <property type="method" value="X-ray"/>
    <property type="resolution" value="3.00 A"/>
    <property type="chains" value="K=1-132"/>
</dbReference>
<dbReference type="PDB" id="2QEX">
    <property type="method" value="X-ray"/>
    <property type="resolution" value="2.90 A"/>
    <property type="chains" value="K=1-132"/>
</dbReference>
<dbReference type="PDB" id="3CC2">
    <property type="method" value="X-ray"/>
    <property type="resolution" value="2.40 A"/>
    <property type="chains" value="K=1-132"/>
</dbReference>
<dbReference type="PDB" id="3CC4">
    <property type="method" value="X-ray"/>
    <property type="resolution" value="2.70 A"/>
    <property type="chains" value="K=1-132"/>
</dbReference>
<dbReference type="PDB" id="3CC7">
    <property type="method" value="X-ray"/>
    <property type="resolution" value="2.70 A"/>
    <property type="chains" value="K=1-132"/>
</dbReference>
<dbReference type="PDB" id="3CCE">
    <property type="method" value="X-ray"/>
    <property type="resolution" value="2.75 A"/>
    <property type="chains" value="K=1-132"/>
</dbReference>
<dbReference type="PDB" id="3CCJ">
    <property type="method" value="X-ray"/>
    <property type="resolution" value="2.70 A"/>
    <property type="chains" value="K=1-132"/>
</dbReference>
<dbReference type="PDB" id="3CCL">
    <property type="method" value="X-ray"/>
    <property type="resolution" value="2.90 A"/>
    <property type="chains" value="K=1-132"/>
</dbReference>
<dbReference type="PDB" id="3CCM">
    <property type="method" value="X-ray"/>
    <property type="resolution" value="2.55 A"/>
    <property type="chains" value="K=1-132"/>
</dbReference>
<dbReference type="PDB" id="3CCQ">
    <property type="method" value="X-ray"/>
    <property type="resolution" value="2.90 A"/>
    <property type="chains" value="K=1-132"/>
</dbReference>
<dbReference type="PDB" id="3CCR">
    <property type="method" value="X-ray"/>
    <property type="resolution" value="3.00 A"/>
    <property type="chains" value="K=1-132"/>
</dbReference>
<dbReference type="PDB" id="3CCS">
    <property type="method" value="X-ray"/>
    <property type="resolution" value="2.95 A"/>
    <property type="chains" value="K=1-132"/>
</dbReference>
<dbReference type="PDB" id="3CCU">
    <property type="method" value="X-ray"/>
    <property type="resolution" value="2.80 A"/>
    <property type="chains" value="K=1-132"/>
</dbReference>
<dbReference type="PDB" id="3CCV">
    <property type="method" value="X-ray"/>
    <property type="resolution" value="2.90 A"/>
    <property type="chains" value="K=1-132"/>
</dbReference>
<dbReference type="PDB" id="3CD6">
    <property type="method" value="X-ray"/>
    <property type="resolution" value="2.75 A"/>
    <property type="chains" value="K=1-132"/>
</dbReference>
<dbReference type="PDB" id="3CMA">
    <property type="method" value="X-ray"/>
    <property type="resolution" value="2.80 A"/>
    <property type="chains" value="K=1-132"/>
</dbReference>
<dbReference type="PDB" id="3CME">
    <property type="method" value="X-ray"/>
    <property type="resolution" value="2.95 A"/>
    <property type="chains" value="K=1-132"/>
</dbReference>
<dbReference type="PDB" id="3CPW">
    <property type="method" value="X-ray"/>
    <property type="resolution" value="2.70 A"/>
    <property type="chains" value="J=1-132"/>
</dbReference>
<dbReference type="PDB" id="3CXC">
    <property type="method" value="X-ray"/>
    <property type="resolution" value="3.00 A"/>
    <property type="chains" value="J=1-132"/>
</dbReference>
<dbReference type="PDB" id="3G4S">
    <property type="method" value="X-ray"/>
    <property type="resolution" value="3.20 A"/>
    <property type="chains" value="K=1-132"/>
</dbReference>
<dbReference type="PDB" id="3G6E">
    <property type="method" value="X-ray"/>
    <property type="resolution" value="2.70 A"/>
    <property type="chains" value="K=1-132"/>
</dbReference>
<dbReference type="PDB" id="3G71">
    <property type="method" value="X-ray"/>
    <property type="resolution" value="2.85 A"/>
    <property type="chains" value="K=1-132"/>
</dbReference>
<dbReference type="PDB" id="3I55">
    <property type="method" value="X-ray"/>
    <property type="resolution" value="3.11 A"/>
    <property type="chains" value="K=1-132"/>
</dbReference>
<dbReference type="PDB" id="3I56">
    <property type="method" value="X-ray"/>
    <property type="resolution" value="2.90 A"/>
    <property type="chains" value="K=1-132"/>
</dbReference>
<dbReference type="PDB" id="3OW2">
    <property type="method" value="X-ray"/>
    <property type="resolution" value="2.70 A"/>
    <property type="chains" value="J=1-132"/>
</dbReference>
<dbReference type="PDB" id="4ADX">
    <property type="method" value="EM"/>
    <property type="resolution" value="6.60 A"/>
    <property type="chains" value="K=1-132"/>
</dbReference>
<dbReference type="PDB" id="4V9F">
    <property type="method" value="X-ray"/>
    <property type="resolution" value="2.40 A"/>
    <property type="chains" value="K=1-132"/>
</dbReference>
<dbReference type="PDBsum" id="1C04"/>
<dbReference type="PDBsum" id="1FFK"/>
<dbReference type="PDBsum" id="1JJ2"/>
<dbReference type="PDBsum" id="1K73"/>
<dbReference type="PDBsum" id="1K8A"/>
<dbReference type="PDBsum" id="1K9M"/>
<dbReference type="PDBsum" id="1KC8"/>
<dbReference type="PDBsum" id="1KD1"/>
<dbReference type="PDBsum" id="1KQS"/>
<dbReference type="PDBsum" id="1M1K"/>
<dbReference type="PDBsum" id="1M90"/>
<dbReference type="PDBsum" id="1N8R"/>
<dbReference type="PDBsum" id="1NJI"/>
<dbReference type="PDBsum" id="1Q7Y"/>
<dbReference type="PDBsum" id="1Q81"/>
<dbReference type="PDBsum" id="1Q82"/>
<dbReference type="PDBsum" id="1Q86"/>
<dbReference type="PDBsum" id="1QVF"/>
<dbReference type="PDBsum" id="1QVG"/>
<dbReference type="PDBsum" id="1S72"/>
<dbReference type="PDBsum" id="1VQ4"/>
<dbReference type="PDBsum" id="1VQ5"/>
<dbReference type="PDBsum" id="1VQ6"/>
<dbReference type="PDBsum" id="1VQ7"/>
<dbReference type="PDBsum" id="1VQ8"/>
<dbReference type="PDBsum" id="1VQ9"/>
<dbReference type="PDBsum" id="1VQK"/>
<dbReference type="PDBsum" id="1VQL"/>
<dbReference type="PDBsum" id="1VQM"/>
<dbReference type="PDBsum" id="1VQN"/>
<dbReference type="PDBsum" id="1VQO"/>
<dbReference type="PDBsum" id="1VQP"/>
<dbReference type="PDBsum" id="1W2B"/>
<dbReference type="PDBsum" id="1YHQ"/>
<dbReference type="PDBsum" id="1YI2"/>
<dbReference type="PDBsum" id="1YIJ"/>
<dbReference type="PDBsum" id="1YIT"/>
<dbReference type="PDBsum" id="1YJ9"/>
<dbReference type="PDBsum" id="1YJN"/>
<dbReference type="PDBsum" id="1YJW"/>
<dbReference type="PDBsum" id="2OTJ"/>
<dbReference type="PDBsum" id="2OTL"/>
<dbReference type="PDBsum" id="2QA4"/>
<dbReference type="PDBsum" id="2QEX"/>
<dbReference type="PDBsum" id="3CC2"/>
<dbReference type="PDBsum" id="3CC4"/>
<dbReference type="PDBsum" id="3CC7"/>
<dbReference type="PDBsum" id="3CCE"/>
<dbReference type="PDBsum" id="3CCJ"/>
<dbReference type="PDBsum" id="3CCL"/>
<dbReference type="PDBsum" id="3CCM"/>
<dbReference type="PDBsum" id="3CCQ"/>
<dbReference type="PDBsum" id="3CCR"/>
<dbReference type="PDBsum" id="3CCS"/>
<dbReference type="PDBsum" id="3CCU"/>
<dbReference type="PDBsum" id="3CCV"/>
<dbReference type="PDBsum" id="3CD6"/>
<dbReference type="PDBsum" id="3CMA"/>
<dbReference type="PDBsum" id="3CME"/>
<dbReference type="PDBsum" id="3CPW"/>
<dbReference type="PDBsum" id="3CXC"/>
<dbReference type="PDBsum" id="3G4S"/>
<dbReference type="PDBsum" id="3G6E"/>
<dbReference type="PDBsum" id="3G71"/>
<dbReference type="PDBsum" id="3I55"/>
<dbReference type="PDBsum" id="3I56"/>
<dbReference type="PDBsum" id="3OW2"/>
<dbReference type="PDBsum" id="4ADX"/>
<dbReference type="PDBsum" id="4V9F"/>
<dbReference type="SMR" id="P22450"/>
<dbReference type="IntAct" id="P22450">
    <property type="interactions" value="2"/>
</dbReference>
<dbReference type="STRING" id="272569.rrnAC1602"/>
<dbReference type="PaxDb" id="272569-rrnAC1602"/>
<dbReference type="EnsemblBacteria" id="AAV46519">
    <property type="protein sequence ID" value="AAV46519"/>
    <property type="gene ID" value="rrnAC1602"/>
</dbReference>
<dbReference type="KEGG" id="hma:rrnAC1602"/>
<dbReference type="PATRIC" id="fig|272569.17.peg.2291"/>
<dbReference type="eggNOG" id="arCOG04095">
    <property type="taxonomic scope" value="Archaea"/>
</dbReference>
<dbReference type="HOGENOM" id="CLU_095071_3_0_2"/>
<dbReference type="EvolutionaryTrace" id="P22450"/>
<dbReference type="Proteomes" id="UP000001169">
    <property type="component" value="Chromosome I"/>
</dbReference>
<dbReference type="GO" id="GO:0022625">
    <property type="term" value="C:cytosolic large ribosomal subunit"/>
    <property type="evidence" value="ECO:0007669"/>
    <property type="project" value="TreeGrafter"/>
</dbReference>
<dbReference type="GO" id="GO:0070180">
    <property type="term" value="F:large ribosomal subunit rRNA binding"/>
    <property type="evidence" value="ECO:0007669"/>
    <property type="project" value="TreeGrafter"/>
</dbReference>
<dbReference type="GO" id="GO:0003735">
    <property type="term" value="F:structural constituent of ribosome"/>
    <property type="evidence" value="ECO:0007669"/>
    <property type="project" value="InterPro"/>
</dbReference>
<dbReference type="GO" id="GO:0006412">
    <property type="term" value="P:translation"/>
    <property type="evidence" value="ECO:0007669"/>
    <property type="project" value="UniProtKB-UniRule"/>
</dbReference>
<dbReference type="CDD" id="cd00337">
    <property type="entry name" value="Ribosomal_uL14"/>
    <property type="match status" value="1"/>
</dbReference>
<dbReference type="FunFam" id="2.40.150.20:FF:000007">
    <property type="entry name" value="50S ribosomal protein L14"/>
    <property type="match status" value="1"/>
</dbReference>
<dbReference type="Gene3D" id="2.40.150.20">
    <property type="entry name" value="Ribosomal protein L14"/>
    <property type="match status" value="1"/>
</dbReference>
<dbReference type="HAMAP" id="MF_01367">
    <property type="entry name" value="Ribosomal_uL14"/>
    <property type="match status" value="1"/>
</dbReference>
<dbReference type="InterPro" id="IPR000218">
    <property type="entry name" value="Ribosomal_uL14"/>
</dbReference>
<dbReference type="InterPro" id="IPR019971">
    <property type="entry name" value="Ribosomal_uL14_arc"/>
</dbReference>
<dbReference type="InterPro" id="IPR019972">
    <property type="entry name" value="Ribosomal_uL14_CS"/>
</dbReference>
<dbReference type="InterPro" id="IPR036853">
    <property type="entry name" value="Ribosomal_uL14_sf"/>
</dbReference>
<dbReference type="NCBIfam" id="NF006344">
    <property type="entry name" value="PRK08571.1"/>
    <property type="match status" value="1"/>
</dbReference>
<dbReference type="NCBIfam" id="TIGR03673">
    <property type="entry name" value="uL14_arch"/>
    <property type="match status" value="1"/>
</dbReference>
<dbReference type="PANTHER" id="PTHR11761">
    <property type="entry name" value="50S/60S RIBOSOMAL PROTEIN L14/L23"/>
    <property type="match status" value="1"/>
</dbReference>
<dbReference type="PANTHER" id="PTHR11761:SF8">
    <property type="entry name" value="LARGE RIBOSOMAL SUBUNIT PROTEIN UL14"/>
    <property type="match status" value="1"/>
</dbReference>
<dbReference type="Pfam" id="PF00238">
    <property type="entry name" value="Ribosomal_L14"/>
    <property type="match status" value="1"/>
</dbReference>
<dbReference type="SMART" id="SM01374">
    <property type="entry name" value="Ribosomal_L14"/>
    <property type="match status" value="1"/>
</dbReference>
<dbReference type="SUPFAM" id="SSF50193">
    <property type="entry name" value="Ribosomal protein L14"/>
    <property type="match status" value="1"/>
</dbReference>
<dbReference type="PROSITE" id="PS00049">
    <property type="entry name" value="RIBOSOMAL_L14"/>
    <property type="match status" value="1"/>
</dbReference>
<evidence type="ECO:0000250" key="1"/>
<evidence type="ECO:0000255" key="2">
    <source>
        <dbReference type="HAMAP-Rule" id="MF_01367"/>
    </source>
</evidence>
<evidence type="ECO:0000269" key="3">
    <source>
    </source>
</evidence>
<evidence type="ECO:0000269" key="4">
    <source>
    </source>
</evidence>
<evidence type="ECO:0000305" key="5"/>
<evidence type="ECO:0007829" key="6">
    <source>
        <dbReference type="PDB" id="1VQ8"/>
    </source>
</evidence>
<evidence type="ECO:0007829" key="7">
    <source>
        <dbReference type="PDB" id="3CME"/>
    </source>
</evidence>
<keyword id="KW-0002">3D-structure</keyword>
<keyword id="KW-1185">Reference proteome</keyword>
<keyword id="KW-0687">Ribonucleoprotein</keyword>
<keyword id="KW-0689">Ribosomal protein</keyword>
<keyword id="KW-0694">RNA-binding</keyword>
<keyword id="KW-0699">rRNA-binding</keyword>
<accession>P22450</accession>
<accession>Q5V1T3</accession>
<sequence length="132" mass="14193">MEALGADVTQGLEKGSLITCADNTGARELKVISVHGYSGTKNRHPKAGLGDKITVSVTKGTPEMRRQVLEAVVVRQRKPIRRPDGTRVKFEDNAAVIVDENEDPRGTELKGPIAREVAQRFGSVASAATMIV</sequence>
<protein>
    <recommendedName>
        <fullName evidence="2">Large ribosomal subunit protein uL14</fullName>
    </recommendedName>
    <alternativeName>
        <fullName evidence="5">50S ribosomal protein L14</fullName>
    </alternativeName>
    <alternativeName>
        <fullName>Hl27</fullName>
    </alternativeName>
    <alternativeName>
        <fullName>Hmal14</fullName>
    </alternativeName>
</protein>
<reference key="1">
    <citation type="journal article" date="1990" name="FEBS Lett.">
        <title>Nucleotide sequence of four genes encoding ribosomal proteins from the 'S10 and spectinomycin' operon equivalent region in the archaebacterium Halobacterium marismortui.</title>
        <authorList>
            <person name="Arndt E."/>
        </authorList>
    </citation>
    <scope>NUCLEOTIDE SEQUENCE [GENOMIC DNA]</scope>
</reference>
<reference key="2">
    <citation type="journal article" date="2004" name="Genome Res.">
        <title>Genome sequence of Haloarcula marismortui: a halophilic archaeon from the Dead Sea.</title>
        <authorList>
            <person name="Baliga N.S."/>
            <person name="Bonneau R."/>
            <person name="Facciotti M.T."/>
            <person name="Pan M."/>
            <person name="Glusman G."/>
            <person name="Deutsch E.W."/>
            <person name="Shannon P."/>
            <person name="Chiu Y."/>
            <person name="Weng R.S."/>
            <person name="Gan R.R."/>
            <person name="Hung P."/>
            <person name="Date S.V."/>
            <person name="Marcotte E."/>
            <person name="Hood L."/>
            <person name="Ng W.V."/>
        </authorList>
    </citation>
    <scope>NUCLEOTIDE SEQUENCE [LARGE SCALE GENOMIC DNA]</scope>
    <source>
        <strain>ATCC 43049 / DSM 3752 / JCM 8966 / VKM B-1809</strain>
    </source>
</reference>
<reference key="3">
    <citation type="journal article" date="2000" name="Science">
        <title>The complete atomic structure of the large ribosomal subunit at 2.4 A resolution.</title>
        <authorList>
            <person name="Ban N."/>
            <person name="Nissen P."/>
            <person name="Hansen J."/>
            <person name="Moore P.B."/>
            <person name="Steitz T.A."/>
        </authorList>
    </citation>
    <scope>X-RAY CRYSTALLOGRAPHY (2.4 ANGSTROMS) OF THE 50S SUBUNIT</scope>
    <source>
        <strain>ATCC 43049 / DSM 3752 / JCM 8966 / VKM B-1809</strain>
    </source>
</reference>
<reference key="4">
    <citation type="journal article" date="2000" name="Science">
        <title>The structural basis of ribosome activity in peptide bond synthesis.</title>
        <authorList>
            <person name="Nissen P."/>
            <person name="Hansen J."/>
            <person name="Ban N."/>
            <person name="Moore P.B."/>
            <person name="Steitz T.A."/>
        </authorList>
    </citation>
    <scope>X-RAY CRYSTALLOGRAPHY (3.0 ANGSTROMS) OF THE 50S SUBUNIT</scope>
    <source>
        <strain>ATCC 43049 / DSM 3752 / JCM 8966 / VKM B-1809</strain>
    </source>
</reference>
<reference key="5">
    <citation type="journal article" date="2002" name="Nat. Struct. Biol.">
        <title>A pre-translocational intermediate in protein synthesis observed in crystals of enzymatically active 50S subunits.</title>
        <authorList>
            <person name="Schmeing T.M."/>
            <person name="Seila A.C."/>
            <person name="Hansen J.L."/>
            <person name="Freeborn B."/>
            <person name="Soukup J.K."/>
            <person name="Scaringe S.A."/>
            <person name="Strobel S.A."/>
            <person name="Moore P.B."/>
            <person name="Steitz T.A."/>
        </authorList>
    </citation>
    <scope>X-RAY CRYSTALLOGRAPHY (3.1 ANGSTROMS) OF THE 50S SUBUNIT</scope>
    <source>
        <strain>ATCC 43049 / DSM 3752 / JCM 8966 / VKM B-1809</strain>
    </source>
</reference>
<reference key="6">
    <citation type="journal article" date="1999" name="Nature">
        <title>Placement of protein and RNA structures into a 5 A-resolution map of the 50S ribosomal subunit.</title>
        <authorList>
            <person name="Ban N."/>
            <person name="Nissen P."/>
            <person name="Hansen J."/>
            <person name="Capel M."/>
            <person name="Moore P.B."/>
            <person name="Steitz T.A."/>
        </authorList>
    </citation>
    <scope>3D-STRUCTURE MODELING</scope>
</reference>
<reference key="7">
    <citation type="journal article" date="2001" name="EMBO J.">
        <title>The kink-turn: a new RNA secondary structure motif.</title>
        <authorList>
            <person name="Klein D.J."/>
            <person name="Schmeing T.M."/>
            <person name="Moore P.B."/>
            <person name="Steitz T.A."/>
        </authorList>
    </citation>
    <scope>X-RAY CRYSTALLOGRAPHY (2.4 ANGSTROMS) OF THE 50S SUBUNIT</scope>
    <source>
        <strain>ATCC 43049 / DSM 3752 / JCM 8966 / VKM B-1809</strain>
    </source>
</reference>
<reference key="8">
    <citation type="journal article" date="2002" name="Mol. Cell">
        <title>The structures of four macrolide antibiotics bound to the large ribosomal subunit.</title>
        <authorList>
            <person name="Hansen J.L."/>
            <person name="Ippolito J.A."/>
            <person name="Ban N."/>
            <person name="Nissen P."/>
            <person name="Moore P.B."/>
            <person name="Steitz T.A."/>
        </authorList>
    </citation>
    <scope>X-RAY CRYSTALLOGRAPHY (3.0 ANGSTROMS) OF THE 50S SUBUNIT IN COMPLEX WITH FOUR MACROLIDE ANTIBIOTICS</scope>
    <source>
        <strain>ATCC 43049 / DSM 3752 / JCM 8966 / VKM B-1809</strain>
    </source>
</reference>
<reference key="9">
    <citation type="journal article" date="2002" name="Proc. Natl. Acad. Sci. U.S.A.">
        <title>Structural insights into peptide bond formation.</title>
        <authorList>
            <person name="Hansen J.L."/>
            <person name="Schmeing T.M."/>
            <person name="Moore P.B."/>
            <person name="Steitz T.A."/>
        </authorList>
    </citation>
    <scope>X-RAY CRYSTALLOGRAPHY (2.8 ANGSTROMS) OF THE 50S SUBUNIT</scope>
    <source>
        <strain>ATCC 43049 / DSM 3752 / JCM 8966 / VKM B-1809</strain>
    </source>
</reference>
<reference key="10">
    <citation type="journal article" date="2003" name="J. Mol. Biol.">
        <title>Structures of five antibiotics bound at the peptidyl transferase center of the large ribosomal subunit.</title>
        <authorList>
            <person name="Hansen J.L."/>
            <person name="Moore P.B."/>
            <person name="Steitz T.A."/>
        </authorList>
    </citation>
    <scope>X-RAY CRYSTALLOGRAPHY (3.0 ANGSTROMS) OF THE 50S SUBUNIT IN COMPLEX WITH FIVE ANTIBIOTICS AT THE PEPTIDYL TRANSFERASE CENTER</scope>
    <source>
        <strain>ATCC 43049 / DSM 3752 / JCM 8966 / VKM B-1809</strain>
    </source>
</reference>
<reference key="11">
    <citation type="journal article" date="2003" name="RNA">
        <title>Structures of deacylated tRNA mimics bound to the E site of the large ribosomal subunit.</title>
        <authorList>
            <person name="Schmeing T.M."/>
            <person name="Moore P.B."/>
            <person name="Steitz T.A."/>
        </authorList>
    </citation>
    <scope>X-RAY CRYSTALLOGRAPHY (2.9 ANGSTROMS) OF THE 50S SUBUNIT WITH TWO DIFFERENT E SITE SUBSTRATES</scope>
</reference>
<reference key="12">
    <citation type="journal article" date="2013" name="Acta Crystallogr. D">
        <title>Revisiting the Haloarcula marismortui 50S ribosomal subunit model.</title>
        <authorList>
            <person name="Gabdulkhakov A."/>
            <person name="Nikonov S."/>
            <person name="Garber M."/>
        </authorList>
    </citation>
    <scope>X-RAY CRYSTALLOGRAPHY (2.4 ANGSTROMS) OF THE 50S SUBUNIT</scope>
</reference>
<organism>
    <name type="scientific">Haloarcula marismortui (strain ATCC 43049 / DSM 3752 / JCM 8966 / VKM B-1809)</name>
    <name type="common">Halobacterium marismortui</name>
    <dbReference type="NCBI Taxonomy" id="272569"/>
    <lineage>
        <taxon>Archaea</taxon>
        <taxon>Methanobacteriati</taxon>
        <taxon>Methanobacteriota</taxon>
        <taxon>Stenosarchaea group</taxon>
        <taxon>Halobacteria</taxon>
        <taxon>Halobacteriales</taxon>
        <taxon>Haloarculaceae</taxon>
        <taxon>Haloarcula</taxon>
    </lineage>
</organism>
<gene>
    <name evidence="2" type="primary">rpl14</name>
    <name type="ordered locus">rrnAC1602</name>
</gene>
<comment type="function">
    <text evidence="1">Forms part of two intersubunit bridges in the 70S ribosome (By similarity). Binds to 23S rRNA.</text>
</comment>
<comment type="subunit">
    <text evidence="1 3 4">The L3/L14/L24e cluster may contact the 16S rRNA in 2 intersubunit bridges (By similarity). Part of the 50S ribosomal subunit. Forms a cluster with proteins L3 and L24e.</text>
</comment>
<comment type="similarity">
    <text evidence="2">Belongs to the universal ribosomal protein uL14 family.</text>
</comment>
<proteinExistence type="evidence at protein level"/>
<name>RL14_HALMA</name>